<organism>
    <name type="scientific">Caldanaerobacter subterraneus subsp. tengcongensis (strain DSM 15242 / JCM 11007 / NBRC 100824 / MB4)</name>
    <name type="common">Thermoanaerobacter tengcongensis</name>
    <dbReference type="NCBI Taxonomy" id="273068"/>
    <lineage>
        <taxon>Bacteria</taxon>
        <taxon>Bacillati</taxon>
        <taxon>Bacillota</taxon>
        <taxon>Clostridia</taxon>
        <taxon>Thermoanaerobacterales</taxon>
        <taxon>Thermoanaerobacteraceae</taxon>
        <taxon>Caldanaerobacter</taxon>
    </lineage>
</organism>
<reference key="1">
    <citation type="journal article" date="2002" name="Genome Res.">
        <title>A complete sequence of the T. tengcongensis genome.</title>
        <authorList>
            <person name="Bao Q."/>
            <person name="Tian Y."/>
            <person name="Li W."/>
            <person name="Xu Z."/>
            <person name="Xuan Z."/>
            <person name="Hu S."/>
            <person name="Dong W."/>
            <person name="Yang J."/>
            <person name="Chen Y."/>
            <person name="Xue Y."/>
            <person name="Xu Y."/>
            <person name="Lai X."/>
            <person name="Huang L."/>
            <person name="Dong X."/>
            <person name="Ma Y."/>
            <person name="Ling L."/>
            <person name="Tan H."/>
            <person name="Chen R."/>
            <person name="Wang J."/>
            <person name="Yu J."/>
            <person name="Yang H."/>
        </authorList>
    </citation>
    <scope>NUCLEOTIDE SEQUENCE [LARGE SCALE GENOMIC DNA]</scope>
    <source>
        <strain>DSM 15242 / JCM 11007 / NBRC 100824 / MB4</strain>
    </source>
</reference>
<feature type="chain" id="PRO_0000169922" description="Galactose-1-phosphate uridylyltransferase">
    <location>
        <begin position="1"/>
        <end position="519"/>
    </location>
</feature>
<name>GALT_CALS4</name>
<dbReference type="EC" id="2.7.7.12" evidence="1"/>
<dbReference type="EMBL" id="AE008691">
    <property type="protein sequence ID" value="AAM25108.1"/>
    <property type="molecule type" value="Genomic_DNA"/>
</dbReference>
<dbReference type="RefSeq" id="WP_009609960.1">
    <property type="nucleotide sequence ID" value="NC_003869.1"/>
</dbReference>
<dbReference type="STRING" id="273068.TTE1929"/>
<dbReference type="KEGG" id="tte:TTE1929"/>
<dbReference type="eggNOG" id="COG4468">
    <property type="taxonomic scope" value="Bacteria"/>
</dbReference>
<dbReference type="HOGENOM" id="CLU_047799_0_0_9"/>
<dbReference type="OrthoDB" id="2293at2"/>
<dbReference type="UniPathway" id="UPA00214"/>
<dbReference type="Proteomes" id="UP000000555">
    <property type="component" value="Chromosome"/>
</dbReference>
<dbReference type="GO" id="GO:0005737">
    <property type="term" value="C:cytoplasm"/>
    <property type="evidence" value="ECO:0007669"/>
    <property type="project" value="UniProtKB-SubCell"/>
</dbReference>
<dbReference type="GO" id="GO:0008108">
    <property type="term" value="F:UDP-glucose:hexose-1-phosphate uridylyltransferase activity"/>
    <property type="evidence" value="ECO:0007669"/>
    <property type="project" value="UniProtKB-UniRule"/>
</dbReference>
<dbReference type="GO" id="GO:0006012">
    <property type="term" value="P:galactose metabolic process"/>
    <property type="evidence" value="ECO:0007669"/>
    <property type="project" value="UniProtKB-UniRule"/>
</dbReference>
<dbReference type="HAMAP" id="MF_00571">
    <property type="entry name" value="GalP_UDP_trans"/>
    <property type="match status" value="1"/>
</dbReference>
<dbReference type="InterPro" id="IPR000766">
    <property type="entry name" value="GalP_uridyl_Trfase_II"/>
</dbReference>
<dbReference type="InterPro" id="IPR023425">
    <property type="entry name" value="GalP_uridyl_Trfase_II_CS"/>
</dbReference>
<dbReference type="InterPro" id="IPR005850">
    <property type="entry name" value="GalP_Utransf_C"/>
</dbReference>
<dbReference type="InterPro" id="IPR005849">
    <property type="entry name" value="GalP_Utransf_N"/>
</dbReference>
<dbReference type="NCBIfam" id="TIGR01239">
    <property type="entry name" value="galT_2"/>
    <property type="match status" value="1"/>
</dbReference>
<dbReference type="NCBIfam" id="NF003629">
    <property type="entry name" value="PRK05270.1-2"/>
    <property type="match status" value="1"/>
</dbReference>
<dbReference type="PANTHER" id="PTHR39191:SF1">
    <property type="entry name" value="DUF4922 DOMAIN-CONTAINING PROTEIN"/>
    <property type="match status" value="1"/>
</dbReference>
<dbReference type="PANTHER" id="PTHR39191">
    <property type="entry name" value="GALACTOSE-1-PHOSPHATE URIDYLYLTRANSFERASE"/>
    <property type="match status" value="1"/>
</dbReference>
<dbReference type="Pfam" id="PF02744">
    <property type="entry name" value="GalP_UDP_tr_C"/>
    <property type="match status" value="1"/>
</dbReference>
<dbReference type="Pfam" id="PF01087">
    <property type="entry name" value="GalP_UDP_transf"/>
    <property type="match status" value="1"/>
</dbReference>
<dbReference type="PIRSF" id="PIRSF006005">
    <property type="entry name" value="GalT_BS"/>
    <property type="match status" value="1"/>
</dbReference>
<dbReference type="PROSITE" id="PS01163">
    <property type="entry name" value="GAL_P_UDP_TRANSF_II"/>
    <property type="match status" value="1"/>
</dbReference>
<protein>
    <recommendedName>
        <fullName evidence="1">Galactose-1-phosphate uridylyltransferase</fullName>
        <shortName evidence="1">Gal-1-P uridylyltransferase</shortName>
        <ecNumber evidence="1">2.7.7.12</ecNumber>
    </recommendedName>
    <alternativeName>
        <fullName evidence="1">UDP-glucose--hexose-1-phosphate uridylyltransferase</fullName>
    </alternativeName>
</protein>
<sequence length="519" mass="60468">MTQKDAAFHIERLLKFALKKGLIEELDVIPSRNALMDLFKIEKPYEGEVPEEELDTPSPILNKLLDYGVEIGLIEDTVTYRDLMDARIMGLLMPRESEVVRKFNEIASKDGIEKATEYFYELSKASNYIRMDRTSQNLYWRTPTEYGALEITINLSKPEKDPKEIEKAKKIPQSGYPKCLLCIENVGFAGNLNHPARQNLRIIPVKVAGEQWYFQYSPYVYYNEHCILLHEEHIPMKISEKTFVRLFDFIDQFPHYFMGSNADLPIVGGSILVHEHFQGGRHTFPMEEAPIEEYFIHPKYKEVKAGILKWPMSVIRLSSKDREKLTKLSSHILNVWKGYSDESVDVLAYSEKDGKIVPHNTITPIARFNKEGEYEIDLVLRNNRTTDKYPYGIFHPHEELHHIKKENIGLIEVMGLAVLPGRLKFELEEIRKILTGKEKFNKDMYDENHPLYKHLHWIEELIVKYGTHCTEEEAENYIKQEVGNKFLQVLLDAGVFKRDEKGKKAFEKFMETAGFKKLS</sequence>
<proteinExistence type="inferred from homology"/>
<comment type="catalytic activity">
    <reaction evidence="1">
        <text>alpha-D-galactose 1-phosphate + UDP-alpha-D-glucose = alpha-D-glucose 1-phosphate + UDP-alpha-D-galactose</text>
        <dbReference type="Rhea" id="RHEA:13989"/>
        <dbReference type="ChEBI" id="CHEBI:58336"/>
        <dbReference type="ChEBI" id="CHEBI:58601"/>
        <dbReference type="ChEBI" id="CHEBI:58885"/>
        <dbReference type="ChEBI" id="CHEBI:66914"/>
        <dbReference type="EC" id="2.7.7.12"/>
    </reaction>
</comment>
<comment type="pathway">
    <text evidence="1">Carbohydrate metabolism; galactose metabolism.</text>
</comment>
<comment type="subcellular location">
    <subcellularLocation>
        <location evidence="1">Cytoplasm</location>
    </subcellularLocation>
</comment>
<comment type="similarity">
    <text evidence="1">Belongs to the galactose-1-phosphate uridylyltransferase type 2 family.</text>
</comment>
<gene>
    <name evidence="1" type="primary">galT</name>
    <name type="ordered locus">TTE1929</name>
</gene>
<accession>Q8R8R6</accession>
<keyword id="KW-0119">Carbohydrate metabolism</keyword>
<keyword id="KW-0963">Cytoplasm</keyword>
<keyword id="KW-0299">Galactose metabolism</keyword>
<keyword id="KW-0548">Nucleotidyltransferase</keyword>
<keyword id="KW-1185">Reference proteome</keyword>
<keyword id="KW-0808">Transferase</keyword>
<evidence type="ECO:0000255" key="1">
    <source>
        <dbReference type="HAMAP-Rule" id="MF_00571"/>
    </source>
</evidence>